<proteinExistence type="evidence at protein level"/>
<gene>
    <name type="primary">TIGD2</name>
</gene>
<evidence type="ECO:0000250" key="1"/>
<evidence type="ECO:0000255" key="2"/>
<evidence type="ECO:0000255" key="3">
    <source>
        <dbReference type="PROSITE-ProRule" id="PRU00320"/>
    </source>
</evidence>
<evidence type="ECO:0000255" key="4">
    <source>
        <dbReference type="PROSITE-ProRule" id="PRU00583"/>
    </source>
</evidence>
<evidence type="ECO:0000256" key="5">
    <source>
        <dbReference type="SAM" id="MobiDB-lite"/>
    </source>
</evidence>
<evidence type="ECO:0000305" key="6"/>
<dbReference type="EMBL" id="AC104785">
    <property type="protein sequence ID" value="AAY40951.1"/>
    <property type="molecule type" value="Genomic_DNA"/>
</dbReference>
<dbReference type="CCDS" id="CCDS3633.1"/>
<dbReference type="RefSeq" id="NP_001369309.1">
    <property type="nucleotide sequence ID" value="NM_001382380.1"/>
</dbReference>
<dbReference type="RefSeq" id="NP_663761.1">
    <property type="nucleotide sequence ID" value="NM_145715.3"/>
</dbReference>
<dbReference type="SMR" id="Q4W5G0"/>
<dbReference type="BioGRID" id="127935">
    <property type="interactions" value="4"/>
</dbReference>
<dbReference type="FunCoup" id="Q4W5G0">
    <property type="interactions" value="586"/>
</dbReference>
<dbReference type="IntAct" id="Q4W5G0">
    <property type="interactions" value="1"/>
</dbReference>
<dbReference type="STRING" id="9606.ENSP00000486687"/>
<dbReference type="GlyGen" id="Q4W5G0">
    <property type="glycosylation" value="1 site, 1 O-linked glycan (1 site)"/>
</dbReference>
<dbReference type="iPTMnet" id="Q4W5G0"/>
<dbReference type="PhosphoSitePlus" id="Q4W5G0"/>
<dbReference type="BioMuta" id="TIGD2"/>
<dbReference type="DMDM" id="74754171"/>
<dbReference type="jPOST" id="Q4W5G0"/>
<dbReference type="MassIVE" id="Q4W5G0"/>
<dbReference type="PaxDb" id="9606-ENSP00000317170"/>
<dbReference type="PeptideAtlas" id="Q4W5G0"/>
<dbReference type="ProteomicsDB" id="62372"/>
<dbReference type="Pumba" id="Q4W5G0"/>
<dbReference type="Antibodypedia" id="65566">
    <property type="antibodies" value="19 antibodies from 10 providers"/>
</dbReference>
<dbReference type="DNASU" id="166815"/>
<dbReference type="Ensembl" id="ENST00000603357.3">
    <property type="protein sequence ID" value="ENSP00000486687.1"/>
    <property type="gene ID" value="ENSG00000180346.5"/>
</dbReference>
<dbReference type="GeneID" id="166815"/>
<dbReference type="KEGG" id="hsa:166815"/>
<dbReference type="MANE-Select" id="ENST00000603357.3">
    <property type="protein sequence ID" value="ENSP00000486687.1"/>
    <property type="RefSeq nucleotide sequence ID" value="NM_145715.3"/>
    <property type="RefSeq protein sequence ID" value="NP_663761.1"/>
</dbReference>
<dbReference type="AGR" id="HGNC:18333"/>
<dbReference type="CTD" id="166815"/>
<dbReference type="DisGeNET" id="166815"/>
<dbReference type="GeneCards" id="TIGD2"/>
<dbReference type="HGNC" id="HGNC:18333">
    <property type="gene designation" value="TIGD2"/>
</dbReference>
<dbReference type="HPA" id="ENSG00000180346">
    <property type="expression patterns" value="Tissue enhanced (liver)"/>
</dbReference>
<dbReference type="MIM" id="612973">
    <property type="type" value="gene"/>
</dbReference>
<dbReference type="neXtProt" id="NX_Q4W5G0"/>
<dbReference type="OpenTargets" id="ENSG00000180346"/>
<dbReference type="PharmGKB" id="PA38526"/>
<dbReference type="VEuPathDB" id="HostDB:ENSG00000180346"/>
<dbReference type="eggNOG" id="KOG3105">
    <property type="taxonomic scope" value="Eukaryota"/>
</dbReference>
<dbReference type="GeneTree" id="ENSGT00940000162273"/>
<dbReference type="InParanoid" id="Q4W5G0"/>
<dbReference type="OMA" id="QWFDSQS"/>
<dbReference type="OrthoDB" id="125347at2759"/>
<dbReference type="PAN-GO" id="Q4W5G0">
    <property type="GO annotations" value="2 GO annotations based on evolutionary models"/>
</dbReference>
<dbReference type="PhylomeDB" id="Q4W5G0"/>
<dbReference type="TreeFam" id="TF101131"/>
<dbReference type="PathwayCommons" id="Q4W5G0"/>
<dbReference type="SignaLink" id="Q4W5G0"/>
<dbReference type="BioGRID-ORCS" id="166815">
    <property type="hits" value="13 hits in 1151 CRISPR screens"/>
</dbReference>
<dbReference type="GenomeRNAi" id="166815"/>
<dbReference type="Pharos" id="Q4W5G0">
    <property type="development level" value="Tdark"/>
</dbReference>
<dbReference type="PRO" id="PR:Q4W5G0"/>
<dbReference type="Proteomes" id="UP000005640">
    <property type="component" value="Chromosome 4"/>
</dbReference>
<dbReference type="RNAct" id="Q4W5G0">
    <property type="molecule type" value="protein"/>
</dbReference>
<dbReference type="Bgee" id="ENSG00000180346">
    <property type="expression patterns" value="Expressed in amniotic fluid and 160 other cell types or tissues"/>
</dbReference>
<dbReference type="ExpressionAtlas" id="Q4W5G0">
    <property type="expression patterns" value="baseline and differential"/>
</dbReference>
<dbReference type="GO" id="GO:0005634">
    <property type="term" value="C:nucleus"/>
    <property type="evidence" value="ECO:0000318"/>
    <property type="project" value="GO_Central"/>
</dbReference>
<dbReference type="GO" id="GO:0003677">
    <property type="term" value="F:DNA binding"/>
    <property type="evidence" value="ECO:0000318"/>
    <property type="project" value="GO_Central"/>
</dbReference>
<dbReference type="Gene3D" id="1.10.10.60">
    <property type="entry name" value="Homeodomain-like"/>
    <property type="match status" value="2"/>
</dbReference>
<dbReference type="InterPro" id="IPR050863">
    <property type="entry name" value="CenT-Element_Derived"/>
</dbReference>
<dbReference type="InterPro" id="IPR004875">
    <property type="entry name" value="DDE_SF_endonuclease_dom"/>
</dbReference>
<dbReference type="InterPro" id="IPR009057">
    <property type="entry name" value="Homeodomain-like_sf"/>
</dbReference>
<dbReference type="InterPro" id="IPR006600">
    <property type="entry name" value="HTH_CenpB_DNA-bd_dom"/>
</dbReference>
<dbReference type="InterPro" id="IPR007889">
    <property type="entry name" value="HTH_Psq"/>
</dbReference>
<dbReference type="PANTHER" id="PTHR19303:SF22">
    <property type="entry name" value="TIGGER TRANSPOSABLE ELEMENT-DERIVED PROTEIN 2"/>
    <property type="match status" value="1"/>
</dbReference>
<dbReference type="PANTHER" id="PTHR19303">
    <property type="entry name" value="TRANSPOSON"/>
    <property type="match status" value="1"/>
</dbReference>
<dbReference type="Pfam" id="PF04218">
    <property type="entry name" value="CENP-B_N"/>
    <property type="match status" value="1"/>
</dbReference>
<dbReference type="Pfam" id="PF03184">
    <property type="entry name" value="DDE_1"/>
    <property type="match status" value="1"/>
</dbReference>
<dbReference type="Pfam" id="PF03221">
    <property type="entry name" value="HTH_Tnp_Tc5"/>
    <property type="match status" value="1"/>
</dbReference>
<dbReference type="SMART" id="SM00674">
    <property type="entry name" value="CENPB"/>
    <property type="match status" value="1"/>
</dbReference>
<dbReference type="SUPFAM" id="SSF46689">
    <property type="entry name" value="Homeodomain-like"/>
    <property type="match status" value="2"/>
</dbReference>
<dbReference type="PROSITE" id="PS51253">
    <property type="entry name" value="HTH_CENPB"/>
    <property type="match status" value="1"/>
</dbReference>
<dbReference type="PROSITE" id="PS50960">
    <property type="entry name" value="HTH_PSQ"/>
    <property type="match status" value="1"/>
</dbReference>
<feature type="chain" id="PRO_0000271088" description="Tigger transposable element-derived protein 2">
    <location>
        <begin position="1"/>
        <end position="525"/>
    </location>
</feature>
<feature type="domain" description="HTH psq-type" evidence="3">
    <location>
        <begin position="1"/>
        <end position="52"/>
    </location>
</feature>
<feature type="domain" description="HTH CENPB-type" evidence="4">
    <location>
        <begin position="67"/>
        <end position="139"/>
    </location>
</feature>
<feature type="domain" description="DDE-1" evidence="2">
    <location>
        <begin position="168"/>
        <end position="385"/>
    </location>
</feature>
<feature type="DNA-binding region" description="H-T-H motif" evidence="1">
    <location>
        <begin position="28"/>
        <end position="48"/>
    </location>
</feature>
<feature type="DNA-binding region" description="H-T-H motif" evidence="1">
    <location>
        <begin position="100"/>
        <end position="132"/>
    </location>
</feature>
<feature type="region of interest" description="Disordered" evidence="5">
    <location>
        <begin position="442"/>
        <end position="474"/>
    </location>
</feature>
<feature type="sequence variant" id="VAR_053036" description="In dbSNP:rs2280099.">
    <original>H</original>
    <variation>R</variation>
    <location>
        <position position="475"/>
    </location>
</feature>
<reference key="1">
    <citation type="journal article" date="2005" name="Nature">
        <title>Generation and annotation of the DNA sequences of human chromosomes 2 and 4.</title>
        <authorList>
            <person name="Hillier L.W."/>
            <person name="Graves T.A."/>
            <person name="Fulton R.S."/>
            <person name="Fulton L.A."/>
            <person name="Pepin K.H."/>
            <person name="Minx P."/>
            <person name="Wagner-McPherson C."/>
            <person name="Layman D."/>
            <person name="Wylie K."/>
            <person name="Sekhon M."/>
            <person name="Becker M.C."/>
            <person name="Fewell G.A."/>
            <person name="Delehaunty K.D."/>
            <person name="Miner T.L."/>
            <person name="Nash W.E."/>
            <person name="Kremitzki C."/>
            <person name="Oddy L."/>
            <person name="Du H."/>
            <person name="Sun H."/>
            <person name="Bradshaw-Cordum H."/>
            <person name="Ali J."/>
            <person name="Carter J."/>
            <person name="Cordes M."/>
            <person name="Harris A."/>
            <person name="Isak A."/>
            <person name="van Brunt A."/>
            <person name="Nguyen C."/>
            <person name="Du F."/>
            <person name="Courtney L."/>
            <person name="Kalicki J."/>
            <person name="Ozersky P."/>
            <person name="Abbott S."/>
            <person name="Armstrong J."/>
            <person name="Belter E.A."/>
            <person name="Caruso L."/>
            <person name="Cedroni M."/>
            <person name="Cotton M."/>
            <person name="Davidson T."/>
            <person name="Desai A."/>
            <person name="Elliott G."/>
            <person name="Erb T."/>
            <person name="Fronick C."/>
            <person name="Gaige T."/>
            <person name="Haakenson W."/>
            <person name="Haglund K."/>
            <person name="Holmes A."/>
            <person name="Harkins R."/>
            <person name="Kim K."/>
            <person name="Kruchowski S.S."/>
            <person name="Strong C.M."/>
            <person name="Grewal N."/>
            <person name="Goyea E."/>
            <person name="Hou S."/>
            <person name="Levy A."/>
            <person name="Martinka S."/>
            <person name="Mead K."/>
            <person name="McLellan M.D."/>
            <person name="Meyer R."/>
            <person name="Randall-Maher J."/>
            <person name="Tomlinson C."/>
            <person name="Dauphin-Kohlberg S."/>
            <person name="Kozlowicz-Reilly A."/>
            <person name="Shah N."/>
            <person name="Swearengen-Shahid S."/>
            <person name="Snider J."/>
            <person name="Strong J.T."/>
            <person name="Thompson J."/>
            <person name="Yoakum M."/>
            <person name="Leonard S."/>
            <person name="Pearman C."/>
            <person name="Trani L."/>
            <person name="Radionenko M."/>
            <person name="Waligorski J.E."/>
            <person name="Wang C."/>
            <person name="Rock S.M."/>
            <person name="Tin-Wollam A.-M."/>
            <person name="Maupin R."/>
            <person name="Latreille P."/>
            <person name="Wendl M.C."/>
            <person name="Yang S.-P."/>
            <person name="Pohl C."/>
            <person name="Wallis J.W."/>
            <person name="Spieth J."/>
            <person name="Bieri T.A."/>
            <person name="Berkowicz N."/>
            <person name="Nelson J.O."/>
            <person name="Osborne J."/>
            <person name="Ding L."/>
            <person name="Meyer R."/>
            <person name="Sabo A."/>
            <person name="Shotland Y."/>
            <person name="Sinha P."/>
            <person name="Wohldmann P.E."/>
            <person name="Cook L.L."/>
            <person name="Hickenbotham M.T."/>
            <person name="Eldred J."/>
            <person name="Williams D."/>
            <person name="Jones T.A."/>
            <person name="She X."/>
            <person name="Ciccarelli F.D."/>
            <person name="Izaurralde E."/>
            <person name="Taylor J."/>
            <person name="Schmutz J."/>
            <person name="Myers R.M."/>
            <person name="Cox D.R."/>
            <person name="Huang X."/>
            <person name="McPherson J.D."/>
            <person name="Mardis E.R."/>
            <person name="Clifton S.W."/>
            <person name="Warren W.C."/>
            <person name="Chinwalla A.T."/>
            <person name="Eddy S.R."/>
            <person name="Marra M.A."/>
            <person name="Ovcharenko I."/>
            <person name="Furey T.S."/>
            <person name="Miller W."/>
            <person name="Eichler E.E."/>
            <person name="Bork P."/>
            <person name="Suyama M."/>
            <person name="Torrents D."/>
            <person name="Waterston R.H."/>
            <person name="Wilson R.K."/>
        </authorList>
    </citation>
    <scope>NUCLEOTIDE SEQUENCE [LARGE SCALE GENOMIC DNA]</scope>
</reference>
<comment type="subcellular location">
    <subcellularLocation>
        <location evidence="3 4">Nucleus</location>
    </subcellularLocation>
</comment>
<comment type="similarity">
    <text evidence="6">Belongs to the tigger transposable element derived protein family.</text>
</comment>
<keyword id="KW-0238">DNA-binding</keyword>
<keyword id="KW-0539">Nucleus</keyword>
<keyword id="KW-1267">Proteomics identification</keyword>
<keyword id="KW-1185">Reference proteome</keyword>
<sequence length="525" mass="59623">MLGKRKRVVLTIKDKLDIIKKLEEGISFKKLSVVYGIGESTVRDIKKNKERIINYANSSDPTSGVSKRKSMKSSTYEELDRVMIEWFNQQKTDGIPVSGTICAKQAKFFFDALGMEGDFNASSGWLTRFKQRHGIPKAAGKGTKLKGDETAAREFCGSFQEFVEKENLQPEQIYGADQTGLFWKCLPSRTLTLETDQSTSGCRSSRERIIIMCCANATGLHKLNLCVVGKAKKPRAFKGTDLSNLPVTYYSQKGAWIEQSVFRQWFEKYFVPQVQKHLKSKGLLEKAVLLLDFPPARPNEEMLSSDDGRIIVKYLPPNVTSLIQPMSQGVLATVKRYYRAGLLQKYMDEGNDPKIFWKNLTVLDAIYEVSRAWNMVKSSTITKAWKKLFPGNEENSGMNIDEGAILAANLATVLQNTEECEHVDIENIDQWFDSRSSDSSCQVLTDSESAEDQTKAAEQKPSSKSRKTELNPEKHISHKAALEWTENLLDYLEQQDDMLLSDKLVLRRLRTIIRKKQKIQNNKNH</sequence>
<organism>
    <name type="scientific">Homo sapiens</name>
    <name type="common">Human</name>
    <dbReference type="NCBI Taxonomy" id="9606"/>
    <lineage>
        <taxon>Eukaryota</taxon>
        <taxon>Metazoa</taxon>
        <taxon>Chordata</taxon>
        <taxon>Craniata</taxon>
        <taxon>Vertebrata</taxon>
        <taxon>Euteleostomi</taxon>
        <taxon>Mammalia</taxon>
        <taxon>Eutheria</taxon>
        <taxon>Euarchontoglires</taxon>
        <taxon>Primates</taxon>
        <taxon>Haplorrhini</taxon>
        <taxon>Catarrhini</taxon>
        <taxon>Hominidae</taxon>
        <taxon>Homo</taxon>
    </lineage>
</organism>
<protein>
    <recommendedName>
        <fullName>Tigger transposable element-derived protein 2</fullName>
    </recommendedName>
</protein>
<name>TIGD2_HUMAN</name>
<accession>Q4W5G0</accession>